<accession>P37842</accession>
<name>CYTM_SOLTU</name>
<organism>
    <name type="scientific">Solanum tuberosum</name>
    <name type="common">Potato</name>
    <dbReference type="NCBI Taxonomy" id="4113"/>
    <lineage>
        <taxon>Eukaryota</taxon>
        <taxon>Viridiplantae</taxon>
        <taxon>Streptophyta</taxon>
        <taxon>Embryophyta</taxon>
        <taxon>Tracheophyta</taxon>
        <taxon>Spermatophyta</taxon>
        <taxon>Magnoliopsida</taxon>
        <taxon>eudicotyledons</taxon>
        <taxon>Gunneridae</taxon>
        <taxon>Pentapetalae</taxon>
        <taxon>asterids</taxon>
        <taxon>lamiids</taxon>
        <taxon>Solanales</taxon>
        <taxon>Solanaceae</taxon>
        <taxon>Solanoideae</taxon>
        <taxon>Solaneae</taxon>
        <taxon>Solanum</taxon>
    </lineage>
</organism>
<proteinExistence type="evidence at protein level"/>
<reference key="1">
    <citation type="journal article" date="1993" name="Plant Mol. Biol.">
        <title>Characterization of a genomic sequence coding for potato multicystatin, an eight-domain cysteine proteinase inhibitor.</title>
        <authorList>
            <person name="Waldron C."/>
            <person name="Wegrich L.M."/>
            <person name="Merlo P.A."/>
            <person name="Walsh T.A."/>
        </authorList>
    </citation>
    <scope>NUCLEOTIDE SEQUENCE [GENOMIC DNA]</scope>
    <source>
        <strain>cv. Superior</strain>
    </source>
</reference>
<keyword id="KW-0002">3D-structure</keyword>
<keyword id="KW-0646">Protease inhibitor</keyword>
<keyword id="KW-1185">Reference proteome</keyword>
<keyword id="KW-0677">Repeat</keyword>
<keyword id="KW-0789">Thiol protease inhibitor</keyword>
<protein>
    <recommendedName>
        <fullName>Multicystatin</fullName>
        <shortName>MC</shortName>
    </recommendedName>
</protein>
<evidence type="ECO:0000250" key="1"/>
<evidence type="ECO:0000305" key="2"/>
<evidence type="ECO:0007829" key="3">
    <source>
        <dbReference type="PDB" id="2W9Q"/>
    </source>
</evidence>
<evidence type="ECO:0007829" key="4">
    <source>
        <dbReference type="PDB" id="4LZI"/>
    </source>
</evidence>
<comment type="function">
    <text>Probably has a role in the plant's defense system.</text>
</comment>
<comment type="tissue specificity">
    <text>Expressed abundantly in tuber and leaf.</text>
</comment>
<comment type="induction">
    <text>By wounding.</text>
</comment>
<comment type="similarity">
    <text evidence="2">Belongs to the cystatin family. Phytocystatin subfamily.</text>
</comment>
<feature type="chain" id="PRO_0000207159" description="Multicystatin">
    <location>
        <begin position="1"/>
        <end position="756"/>
    </location>
</feature>
<feature type="domain" description="Cystatin 1">
    <location>
        <begin position="3"/>
        <end position="96"/>
    </location>
</feature>
<feature type="domain" description="Cystatin 2">
    <location>
        <begin position="97"/>
        <end position="191"/>
    </location>
</feature>
<feature type="domain" description="Cystatin 3">
    <location>
        <begin position="192"/>
        <end position="285"/>
    </location>
</feature>
<feature type="domain" description="Cystatin 4">
    <location>
        <begin position="286"/>
        <end position="380"/>
    </location>
</feature>
<feature type="domain" description="Cystatin 5">
    <location>
        <begin position="381"/>
        <end position="474"/>
    </location>
</feature>
<feature type="domain" description="Cystatin 6">
    <location>
        <begin position="475"/>
        <end position="568"/>
    </location>
</feature>
<feature type="domain" description="Cystatin 7">
    <location>
        <begin position="569"/>
        <end position="662"/>
    </location>
</feature>
<feature type="domain" description="Cystatin 8">
    <location>
        <begin position="663"/>
        <end position="756"/>
    </location>
</feature>
<feature type="short sequence motif" description="Secondary area of contact" evidence="1">
    <location>
        <begin position="48"/>
        <end position="52"/>
    </location>
</feature>
<feature type="short sequence motif" description="Secondary area of contact" evidence="1">
    <location>
        <begin position="142"/>
        <end position="146"/>
    </location>
</feature>
<feature type="short sequence motif" description="Secondary area of contact" evidence="1">
    <location>
        <begin position="237"/>
        <end position="241"/>
    </location>
</feature>
<feature type="short sequence motif" description="Secondary area of contact" evidence="1">
    <location>
        <begin position="331"/>
        <end position="335"/>
    </location>
</feature>
<feature type="short sequence motif" description="Secondary area of contact" evidence="1">
    <location>
        <begin position="426"/>
        <end position="430"/>
    </location>
</feature>
<feature type="short sequence motif" description="Secondary area of contact" evidence="1">
    <location>
        <begin position="520"/>
        <end position="524"/>
    </location>
</feature>
<feature type="short sequence motif" description="Secondary area of contact" evidence="1">
    <location>
        <begin position="614"/>
        <end position="618"/>
    </location>
</feature>
<feature type="short sequence motif" description="Secondary area of contact" evidence="1">
    <location>
        <begin position="708"/>
        <end position="712"/>
    </location>
</feature>
<feature type="site" description="Reactive site" evidence="1">
    <location>
        <position position="5"/>
    </location>
</feature>
<feature type="site" description="Reactive site" evidence="1">
    <location>
        <position position="99"/>
    </location>
</feature>
<feature type="site" description="Reactive site" evidence="1">
    <location>
        <position position="194"/>
    </location>
</feature>
<feature type="site" description="Reactive site" evidence="1">
    <location>
        <position position="288"/>
    </location>
</feature>
<feature type="site" description="Reactive site" evidence="1">
    <location>
        <position position="383"/>
    </location>
</feature>
<feature type="site" description="Reactive site" evidence="1">
    <location>
        <position position="477"/>
    </location>
</feature>
<feature type="site" description="Reactive site" evidence="1">
    <location>
        <position position="571"/>
    </location>
</feature>
<feature type="site" description="Reactive site" evidence="1">
    <location>
        <position position="665"/>
    </location>
</feature>
<feature type="helix" evidence="3">
    <location>
        <begin position="110"/>
        <end position="127"/>
    </location>
</feature>
<feature type="strand" evidence="3">
    <location>
        <begin position="131"/>
        <end position="157"/>
    </location>
</feature>
<feature type="turn" evidence="3">
    <location>
        <begin position="158"/>
        <end position="160"/>
    </location>
</feature>
<feature type="strand" evidence="3">
    <location>
        <begin position="161"/>
        <end position="172"/>
    </location>
</feature>
<feature type="helix" evidence="3">
    <location>
        <begin position="173"/>
        <end position="175"/>
    </location>
</feature>
<feature type="strand" evidence="3">
    <location>
        <begin position="177"/>
        <end position="185"/>
    </location>
</feature>
<feature type="helix" evidence="4">
    <location>
        <begin position="394"/>
        <end position="411"/>
    </location>
</feature>
<feature type="strand" evidence="4">
    <location>
        <begin position="416"/>
        <end position="424"/>
    </location>
</feature>
<feature type="strand" evidence="4">
    <location>
        <begin position="426"/>
        <end position="443"/>
    </location>
</feature>
<feature type="strand" evidence="4">
    <location>
        <begin position="445"/>
        <end position="455"/>
    </location>
</feature>
<feature type="turn" evidence="4">
    <location>
        <begin position="456"/>
        <end position="459"/>
    </location>
</feature>
<feature type="strand" evidence="4">
    <location>
        <begin position="460"/>
        <end position="473"/>
    </location>
</feature>
<feature type="helix" evidence="4">
    <location>
        <begin position="488"/>
        <end position="504"/>
    </location>
</feature>
<feature type="strand" evidence="4">
    <location>
        <begin position="510"/>
        <end position="535"/>
    </location>
</feature>
<feature type="strand" evidence="4">
    <location>
        <begin position="538"/>
        <end position="549"/>
    </location>
</feature>
<feature type="helix" evidence="4">
    <location>
        <begin position="550"/>
        <end position="552"/>
    </location>
</feature>
<feature type="strand" evidence="4">
    <location>
        <begin position="554"/>
        <end position="565"/>
    </location>
</feature>
<feature type="helix" evidence="4">
    <location>
        <begin position="582"/>
        <end position="599"/>
    </location>
</feature>
<feature type="strand" evidence="4">
    <location>
        <begin position="604"/>
        <end position="629"/>
    </location>
</feature>
<feature type="strand" evidence="4">
    <location>
        <begin position="632"/>
        <end position="643"/>
    </location>
</feature>
<feature type="helix" evidence="4">
    <location>
        <begin position="644"/>
        <end position="646"/>
    </location>
</feature>
<feature type="strand" evidence="4">
    <location>
        <begin position="648"/>
        <end position="658"/>
    </location>
</feature>
<dbReference type="EMBL" id="L16450">
    <property type="protein sequence ID" value="AAA16120.1"/>
    <property type="molecule type" value="Genomic_DNA"/>
</dbReference>
<dbReference type="PIR" id="S40305">
    <property type="entry name" value="S40305"/>
</dbReference>
<dbReference type="PDB" id="2W9P">
    <property type="method" value="X-ray"/>
    <property type="resolution" value="2.70 A"/>
    <property type="chains" value="A/B/C/D/E/F/G/H/I/J/K/L/M/N=100-186"/>
</dbReference>
<dbReference type="PDB" id="2W9Q">
    <property type="method" value="X-ray"/>
    <property type="resolution" value="2.50 A"/>
    <property type="chains" value="A=100-186"/>
</dbReference>
<dbReference type="PDB" id="4LZI">
    <property type="method" value="X-ray"/>
    <property type="resolution" value="2.20 A"/>
    <property type="chains" value="A=380-660"/>
</dbReference>
<dbReference type="PDBsum" id="2W9P"/>
<dbReference type="PDBsum" id="2W9Q"/>
<dbReference type="PDBsum" id="4LZI"/>
<dbReference type="SMR" id="P37842"/>
<dbReference type="STRING" id="4113.P37842"/>
<dbReference type="MEROPS" id="I25.015"/>
<dbReference type="MEROPS" id="I25.034"/>
<dbReference type="MEROPS" id="I25.036"/>
<dbReference type="MEROPS" id="I25.039"/>
<dbReference type="MEROPS" id="I25.040"/>
<dbReference type="InParanoid" id="P37842"/>
<dbReference type="EvolutionaryTrace" id="P37842"/>
<dbReference type="Proteomes" id="UP000011115">
    <property type="component" value="Unassembled WGS sequence"/>
</dbReference>
<dbReference type="ExpressionAtlas" id="P37842">
    <property type="expression patterns" value="baseline"/>
</dbReference>
<dbReference type="GO" id="GO:0004869">
    <property type="term" value="F:cysteine-type endopeptidase inhibitor activity"/>
    <property type="evidence" value="ECO:0000318"/>
    <property type="project" value="GO_Central"/>
</dbReference>
<dbReference type="CDD" id="cd00042">
    <property type="entry name" value="CY"/>
    <property type="match status" value="8"/>
</dbReference>
<dbReference type="Gene3D" id="3.10.450.10">
    <property type="match status" value="8"/>
</dbReference>
<dbReference type="InterPro" id="IPR027214">
    <property type="entry name" value="Cystatin"/>
</dbReference>
<dbReference type="InterPro" id="IPR000010">
    <property type="entry name" value="Cystatin_dom"/>
</dbReference>
<dbReference type="InterPro" id="IPR046350">
    <property type="entry name" value="Cystatin_sf"/>
</dbReference>
<dbReference type="InterPro" id="IPR018073">
    <property type="entry name" value="Prot_inh_cystat_CS"/>
</dbReference>
<dbReference type="PANTHER" id="PTHR11413">
    <property type="entry name" value="CYSTATIN FAMILY MEMBER"/>
    <property type="match status" value="1"/>
</dbReference>
<dbReference type="PANTHER" id="PTHR11413:SF116">
    <property type="entry name" value="MULTICYSTATIN"/>
    <property type="match status" value="1"/>
</dbReference>
<dbReference type="Pfam" id="PF00031">
    <property type="entry name" value="Cystatin"/>
    <property type="match status" value="8"/>
</dbReference>
<dbReference type="SMART" id="SM00043">
    <property type="entry name" value="CY"/>
    <property type="match status" value="8"/>
</dbReference>
<dbReference type="SUPFAM" id="SSF54403">
    <property type="entry name" value="Cystatin/monellin"/>
    <property type="match status" value="8"/>
</dbReference>
<dbReference type="PROSITE" id="PS00287">
    <property type="entry name" value="CYSTATIN"/>
    <property type="match status" value="3"/>
</dbReference>
<sequence length="756" mass="86786">MAIVGGLVDVPFENKVEFDDLARFAVQDYNQKNDSSLEFKKVLNVKQQIVAGIMYYITFEATEGGNKKEYEAKILLRKWEDLKKVVGFKLVGDDSTMPGGIVNVPNPNNTKFQELARFAIQDYNKKQNAHLEFVENLNVKEQVVAGIMYYITLAATDDAGKKKIYKAKIWVKEWEDFKKVVEFKLVGDDIAKLGGITDVPFPNNPEFQDLARFAIQVYNKKENVHLEFVENLNVKQQVVAGMMYYITLAAIDAGKKKIYETKIWVKEWEDFKKVVEFKLVGDDSAKTGGIINVPNPNSPEFQDLARFAVQDYNNTQNAHLEFVENLNVKEQLVSGMMYYITLAATDAGNKKEYEAKIWVKEWEDFKKVIDFKLVGNDSAKKLGGFTEVPFPNSPEFQDLTRFAVHQYNKDQNAHLEFVENLNVKKQVVAGMLYYITFAATDGGKKKIYETKIWVKVWENFKKVVEFKLVGDDSAKLGGIINVPFPNNPEFQDLARFAVQDYNKKENAHLEFVENLNVKEQLVAGMLYYITLVAIDAGKKKIYEAKIWVKEWENFKKVIEFKLIGDDSAIIGGFTDVPFPNNPEFQDLARFAVQDYNKKENAHLEYVENLNVKEQLVAGMIYYITLVATDAGKKKIYEAKIWVKEWEDFKKVVEFKLVGDDSAKPGGIIIVPFPNSPEFQDLARFAVQDFNKKENGHLEFVENLNVKEQVVAGMMYYITLAATDARKKEIYETKILVKEWENFKEVQEFKLVGDATK</sequence>